<feature type="chain" id="PRO_0000259882" description="Monosaccharide-sensing protein 1">
    <location>
        <begin position="1"/>
        <end position="734"/>
    </location>
</feature>
<feature type="transmembrane region" description="Helical; Name=1" evidence="1">
    <location>
        <begin position="6"/>
        <end position="26"/>
    </location>
</feature>
<feature type="transmembrane region" description="Helical; Name=2" evidence="1">
    <location>
        <begin position="44"/>
        <end position="64"/>
    </location>
</feature>
<feature type="transmembrane region" description="Helical; Name=3" evidence="1">
    <location>
        <begin position="79"/>
        <end position="99"/>
    </location>
</feature>
<feature type="transmembrane region" description="Helical; Name=4" evidence="1">
    <location>
        <begin position="102"/>
        <end position="122"/>
    </location>
</feature>
<feature type="transmembrane region" description="Helical; Name=5" evidence="1">
    <location>
        <begin position="133"/>
        <end position="153"/>
    </location>
</feature>
<feature type="transmembrane region" description="Helical; Name=6" evidence="1">
    <location>
        <begin position="163"/>
        <end position="183"/>
    </location>
</feature>
<feature type="transmembrane region" description="Helical; Name=7" evidence="1">
    <location>
        <begin position="510"/>
        <end position="530"/>
    </location>
</feature>
<feature type="transmembrane region" description="Helical; Name=8" evidence="1">
    <location>
        <begin position="556"/>
        <end position="576"/>
    </location>
</feature>
<feature type="transmembrane region" description="Helical; Name=9" evidence="1">
    <location>
        <begin position="588"/>
        <end position="608"/>
    </location>
</feature>
<feature type="transmembrane region" description="Helical; Name=10" evidence="1">
    <location>
        <begin position="621"/>
        <end position="641"/>
    </location>
</feature>
<feature type="transmembrane region" description="Helical; Name=11" evidence="1">
    <location>
        <begin position="653"/>
        <end position="673"/>
    </location>
</feature>
<feature type="transmembrane region" description="Helical; Name=12" evidence="1">
    <location>
        <begin position="680"/>
        <end position="700"/>
    </location>
</feature>
<feature type="region of interest" description="Disordered" evidence="2">
    <location>
        <begin position="351"/>
        <end position="403"/>
    </location>
</feature>
<feature type="compositionally biased region" description="Acidic residues" evidence="2">
    <location>
        <begin position="357"/>
        <end position="371"/>
    </location>
</feature>
<feature type="modified residue" description="Phosphoserine" evidence="14">
    <location>
        <position position="446"/>
    </location>
</feature>
<feature type="modified residue" description="Phosphoserine" evidence="14">
    <location>
        <position position="480"/>
    </location>
</feature>
<feature type="sequence conflict" description="In Ref. 1; CAA90628." evidence="10" ref="1">
    <original>M</original>
    <variation>I</variation>
    <location>
        <position position="256"/>
    </location>
</feature>
<feature type="sequence conflict" description="In Ref. 1; CAA90628." evidence="10" ref="1">
    <original>G</original>
    <variation>E</variation>
    <location>
        <position position="681"/>
    </location>
</feature>
<sequence>MKGATLVALAATIGNFLQGWDNATIAGAMVYINKDLNLPTSVQGLVVAMSLIGATVITTCSGPISDWLGRRPMLILSSVMYFVCGLIMLWSPNVYVLCFARLLNGFGAGLAVTLVPVYISETAPPEIRGQLNTLPQFLGSGGMFLSYCMVFTMSLSDSPSWRAMLGVLSIPSLLYLFLTVFYLPESPRWLVSKGRMDEAKRVLQQLCGREDVTDEMALLVEGLDIGGEKTMEDLLVTLEDHEGDDTLETVDEDGQMRLYGTHENQSYLARPVPEQNSSLGLRSRHGSLANQSMILKDPLVNLFGSLHEKMPEAGGNTRSGIFPHFGSMFSTTADAPHGKPAHWEKDIESHYNKDNDDYATDDGAGDDDDSDNDLRSPLMSRQTTSMDKDMIPHPTSGSTLSMRRHSTLMQGNGESSMGIGGGWHMGYRYENDEYKRYYLKEDGAESRRGSIISIPGGPDGGGSYIHASALVSRSVLGPKSVHGSAMVPPEKIAASGPLWSALLEPGVKRALVVGVGIQILQQFSGINGVLYYTPQILERAGVDILLSSLGLSSISASFLISGLTTLLMLPAIVVAMRLMDVSGRRSLLLWTIPVLIVSLVVLVISELIHISKVVNAALSTGCVVLYFCFFVMGYGPIPNILCSEIFPTRVRGLCIAICAMVFWIGDIIVTYSLPVLLSSIGLVGVFSIYAAVCVISWIFVYMKVPETKGMPLEVITDYFAFGAQAQASAPSKDI</sequence>
<organism>
    <name type="scientific">Arabidopsis thaliana</name>
    <name type="common">Mouse-ear cress</name>
    <dbReference type="NCBI Taxonomy" id="3702"/>
    <lineage>
        <taxon>Eukaryota</taxon>
        <taxon>Viridiplantae</taxon>
        <taxon>Streptophyta</taxon>
        <taxon>Embryophyta</taxon>
        <taxon>Tracheophyta</taxon>
        <taxon>Spermatophyta</taxon>
        <taxon>Magnoliopsida</taxon>
        <taxon>eudicotyledons</taxon>
        <taxon>Gunneridae</taxon>
        <taxon>Pentapetalae</taxon>
        <taxon>rosids</taxon>
        <taxon>malvids</taxon>
        <taxon>Brassicales</taxon>
        <taxon>Brassicaceae</taxon>
        <taxon>Camelineae</taxon>
        <taxon>Arabidopsis</taxon>
    </lineage>
</organism>
<evidence type="ECO:0000255" key="1"/>
<evidence type="ECO:0000256" key="2">
    <source>
        <dbReference type="SAM" id="MobiDB-lite"/>
    </source>
</evidence>
<evidence type="ECO:0000269" key="3">
    <source>
    </source>
</evidence>
<evidence type="ECO:0000269" key="4">
    <source>
    </source>
</evidence>
<evidence type="ECO:0000269" key="5">
    <source>
    </source>
</evidence>
<evidence type="ECO:0000269" key="6">
    <source>
    </source>
</evidence>
<evidence type="ECO:0000303" key="7">
    <source>
    </source>
</evidence>
<evidence type="ECO:0000303" key="8">
    <source>
    </source>
</evidence>
<evidence type="ECO:0000303" key="9">
    <source>
    </source>
</evidence>
<evidence type="ECO:0000305" key="10"/>
<evidence type="ECO:0000312" key="11">
    <source>
        <dbReference type="Araport" id="AT1G20840"/>
    </source>
</evidence>
<evidence type="ECO:0000312" key="12">
    <source>
        <dbReference type="EMBL" id="AAD30608.1"/>
    </source>
</evidence>
<evidence type="ECO:0000312" key="13">
    <source>
        <dbReference type="EMBL" id="AAF80627.1"/>
    </source>
</evidence>
<evidence type="ECO:0007744" key="14">
    <source>
    </source>
</evidence>
<gene>
    <name evidence="10" type="primary">MSSP1</name>
    <name evidence="7" type="synonym">MT1</name>
    <name evidence="8 9" type="synonym">TMT1</name>
    <name evidence="11" type="ordered locus">At1g20840</name>
    <name evidence="13" type="ORF">F2D10.36</name>
    <name evidence="12" type="ORF">F9H16.18</name>
</gene>
<comment type="function">
    <text evidence="3 4 5">Sugar proton-coupled antiporter which contributes to vacuolar sugar import (e.g. monosaccharides including glucose, sucrose and fructose), particularly during stress responses (e.g. in response to cold) (PubMed:17158605, PubMed:20709831, PubMed:21668536). Required for cytosolic glucose homeostasis (PubMed:17158605, PubMed:20709831).</text>
</comment>
<comment type="catalytic activity">
    <reaction evidence="4 5">
        <text>D-glucose(out) + H(+)(in) = D-glucose(in) + H(+)(out)</text>
        <dbReference type="Rhea" id="RHEA:73203"/>
        <dbReference type="ChEBI" id="CHEBI:4167"/>
        <dbReference type="ChEBI" id="CHEBI:15378"/>
    </reaction>
    <physiologicalReaction direction="left-to-right" evidence="4 5">
        <dbReference type="Rhea" id="RHEA:73204"/>
    </physiologicalReaction>
</comment>
<comment type="catalytic activity">
    <reaction evidence="4 5">
        <text>sucrose(out) + H(+)(in) = sucrose(in) + H(+)(out)</text>
        <dbReference type="Rhea" id="RHEA:73211"/>
        <dbReference type="ChEBI" id="CHEBI:15378"/>
        <dbReference type="ChEBI" id="CHEBI:17992"/>
    </reaction>
    <physiologicalReaction direction="left-to-right" evidence="4 5">
        <dbReference type="Rhea" id="RHEA:73212"/>
    </physiologicalReaction>
</comment>
<comment type="activity regulation">
    <text evidence="6">Enhanced activation by VIK-mediated phosphorylation promoting carrier activity and consequently vacuolar sugar accumulation.</text>
</comment>
<comment type="subunit">
    <text evidence="6">Binds to VIK at the tonoplast.</text>
</comment>
<comment type="subcellular location">
    <subcellularLocation>
        <location evidence="3 6">Vacuole membrane</location>
        <topology evidence="1">Multi-pass membrane protein</topology>
    </subcellularLocation>
</comment>
<comment type="tissue specificity">
    <text evidence="3">Mostly expressed in juvenile and adult leaves, to a lower extent, in flower tissues, and, at low levels, in roots and stems.</text>
</comment>
<comment type="developmental stage">
    <text evidence="3">Present in pollen cells and in all tissues of young seedlings (PubMed:17158605). In flowers, mainly expressed in petals, filaments, and pollen cells inside anthers (PubMed:17158605). In leaves, mostly observed in mesophyll cells and in cells surrounding the vascular tissue and lower epidermis, and, to a lesser extent, in the upper epidermis (PubMed:17158605).</text>
</comment>
<comment type="induction">
    <text evidence="3">Induced by drought, salt, cold and sugars (e.g. glucose, fructose and sucrose).</text>
</comment>
<comment type="PTM">
    <text evidence="6">Phosphorylated by VIK; this activation promotes carrier activity.</text>
</comment>
<comment type="disruption phenotype">
    <text evidence="3">Reduced accumulation of glucose and fructose during cold adaptation associated with lower glucose import into vacuoles (PubMed:17158605). Plants lacking both MSSP1 and MSSP2 have reduced fresh weight when grown on high glucose containing medium or in response to cold stress, and exhibit increased glucose cytosolic concentrations leading to the stimulation of mitochondrial respiration (PubMed:17158605). In triple knockout plants missing MSSP1, MSSP2 and MSSP3, reduced accumulation of glucose and fructose during cold adaptation (PubMed:17158605).</text>
</comment>
<comment type="similarity">
    <text evidence="10">Belongs to the major facilitator superfamily. Sugar transporter (TC 2.A.1.1) family.</text>
</comment>
<comment type="sequence caution" evidence="10">
    <conflict type="frameshift">
        <sequence resource="EMBL-CDS" id="CAA90628"/>
    </conflict>
</comment>
<accession>Q96290</accession>
<accession>Q9LM67</accession>
<accession>Q9SYQ3</accession>
<proteinExistence type="evidence at protein level"/>
<reference key="1">
    <citation type="submission" date="1995-08" db="EMBL/GenBank/DDBJ databases">
        <title>A new sugar transport protein from Arabidopsis thaliana.</title>
        <authorList>
            <person name="Tjaden J."/>
            <person name="Neuhaus E."/>
        </authorList>
    </citation>
    <scope>NUCLEOTIDE SEQUENCE [MRNA]</scope>
</reference>
<reference key="2">
    <citation type="journal article" date="2000" name="Nature">
        <title>Sequence and analysis of chromosome 1 of the plant Arabidopsis thaliana.</title>
        <authorList>
            <person name="Theologis A."/>
            <person name="Ecker J.R."/>
            <person name="Palm C.J."/>
            <person name="Federspiel N.A."/>
            <person name="Kaul S."/>
            <person name="White O."/>
            <person name="Alonso J."/>
            <person name="Altafi H."/>
            <person name="Araujo R."/>
            <person name="Bowman C.L."/>
            <person name="Brooks S.Y."/>
            <person name="Buehler E."/>
            <person name="Chan A."/>
            <person name="Chao Q."/>
            <person name="Chen H."/>
            <person name="Cheuk R.F."/>
            <person name="Chin C.W."/>
            <person name="Chung M.K."/>
            <person name="Conn L."/>
            <person name="Conway A.B."/>
            <person name="Conway A.R."/>
            <person name="Creasy T.H."/>
            <person name="Dewar K."/>
            <person name="Dunn P."/>
            <person name="Etgu P."/>
            <person name="Feldblyum T.V."/>
            <person name="Feng J.-D."/>
            <person name="Fong B."/>
            <person name="Fujii C.Y."/>
            <person name="Gill J.E."/>
            <person name="Goldsmith A.D."/>
            <person name="Haas B."/>
            <person name="Hansen N.F."/>
            <person name="Hughes B."/>
            <person name="Huizar L."/>
            <person name="Hunter J.L."/>
            <person name="Jenkins J."/>
            <person name="Johnson-Hopson C."/>
            <person name="Khan S."/>
            <person name="Khaykin E."/>
            <person name="Kim C.J."/>
            <person name="Koo H.L."/>
            <person name="Kremenetskaia I."/>
            <person name="Kurtz D.B."/>
            <person name="Kwan A."/>
            <person name="Lam B."/>
            <person name="Langin-Hooper S."/>
            <person name="Lee A."/>
            <person name="Lee J.M."/>
            <person name="Lenz C.A."/>
            <person name="Li J.H."/>
            <person name="Li Y.-P."/>
            <person name="Lin X."/>
            <person name="Liu S.X."/>
            <person name="Liu Z.A."/>
            <person name="Luros J.S."/>
            <person name="Maiti R."/>
            <person name="Marziali A."/>
            <person name="Militscher J."/>
            <person name="Miranda M."/>
            <person name="Nguyen M."/>
            <person name="Nierman W.C."/>
            <person name="Osborne B.I."/>
            <person name="Pai G."/>
            <person name="Peterson J."/>
            <person name="Pham P.K."/>
            <person name="Rizzo M."/>
            <person name="Rooney T."/>
            <person name="Rowley D."/>
            <person name="Sakano H."/>
            <person name="Salzberg S.L."/>
            <person name="Schwartz J.R."/>
            <person name="Shinn P."/>
            <person name="Southwick A.M."/>
            <person name="Sun H."/>
            <person name="Tallon L.J."/>
            <person name="Tambunga G."/>
            <person name="Toriumi M.J."/>
            <person name="Town C.D."/>
            <person name="Utterback T."/>
            <person name="Van Aken S."/>
            <person name="Vaysberg M."/>
            <person name="Vysotskaia V.S."/>
            <person name="Walker M."/>
            <person name="Wu D."/>
            <person name="Yu G."/>
            <person name="Fraser C.M."/>
            <person name="Venter J.C."/>
            <person name="Davis R.W."/>
        </authorList>
    </citation>
    <scope>NUCLEOTIDE SEQUENCE [LARGE SCALE GENOMIC DNA]</scope>
    <source>
        <strain>cv. Columbia</strain>
    </source>
</reference>
<reference key="3">
    <citation type="journal article" date="2017" name="Plant J.">
        <title>Araport11: a complete reannotation of the Arabidopsis thaliana reference genome.</title>
        <authorList>
            <person name="Cheng C.Y."/>
            <person name="Krishnakumar V."/>
            <person name="Chan A.P."/>
            <person name="Thibaud-Nissen F."/>
            <person name="Schobel S."/>
            <person name="Town C.D."/>
        </authorList>
    </citation>
    <scope>GENOME REANNOTATION</scope>
    <source>
        <strain>cv. Columbia</strain>
    </source>
</reference>
<reference key="4">
    <citation type="journal article" date="2006" name="BMC Evol. Biol.">
        <title>The monosaccharide transporter gene family in land plants is ancient and shows differential subfamily expression and expansion across lineages.</title>
        <authorList>
            <person name="Johnson D.A."/>
            <person name="Hill J.P."/>
            <person name="Thomas M.A."/>
        </authorList>
    </citation>
    <scope>GENE FAMILY</scope>
</reference>
<reference key="5">
    <citation type="journal article" date="2006" name="Plant Cell">
        <title>Molecular identification and physiological characterization of a novel monosaccharide transporter from Arabidopsis involved in vacuolar sugar transport.</title>
        <authorList>
            <person name="Wormit A."/>
            <person name="Trentmann O."/>
            <person name="Feifer I."/>
            <person name="Lohr C."/>
            <person name="Tjaden J."/>
            <person name="Meyer S."/>
            <person name="Schmidt U."/>
            <person name="Martinoia E."/>
            <person name="Neuhaus H.E."/>
        </authorList>
    </citation>
    <scope>FUNCTION</scope>
    <scope>DISRUPTION PHENOTYPE</scope>
    <scope>SUBCELLULAR LOCATION</scope>
    <scope>TISSUE SPECIFICITY</scope>
    <scope>DEVELOPMENTAL STAGE</scope>
    <scope>INDUCTION BY DROUGHT; SALT; COLD AND SUGAR</scope>
</reference>
<reference key="6">
    <citation type="journal article" date="2007" name="FEBS Lett.">
        <title>Transport of primary metabolites across the plant vacuolar membrane.</title>
        <authorList>
            <person name="Neuhaus H.E."/>
        </authorList>
    </citation>
    <scope>REVIEW ON VACUOLAR TRANSPORTERS</scope>
</reference>
<reference key="7">
    <citation type="journal article" date="2009" name="J. Proteomics">
        <title>Phosphoproteomic analysis of nuclei-enriched fractions from Arabidopsis thaliana.</title>
        <authorList>
            <person name="Jones A.M.E."/>
            <person name="MacLean D."/>
            <person name="Studholme D.J."/>
            <person name="Serna-Sanz A."/>
            <person name="Andreasson E."/>
            <person name="Rathjen J.P."/>
            <person name="Peck S.C."/>
        </authorList>
    </citation>
    <scope>PHOSPHORYLATION [LARGE SCALE ANALYSIS] AT SER-446 AND SER-480</scope>
    <scope>IDENTIFICATION BY MASS SPECTROMETRY [LARGE SCALE ANALYSIS]</scope>
    <source>
        <strain>cv. Columbia</strain>
    </source>
</reference>
<reference key="8">
    <citation type="journal article" date="2010" name="Plant Physiol.">
        <title>Increased activity of the vacuolar monosaccharide transporter TMT1 alters cellular sugar partitioning, sugar signaling, and seed yield in Arabidopsis.</title>
        <authorList>
            <person name="Wingenter K."/>
            <person name="Schulz A."/>
            <person name="Wormit A."/>
            <person name="Wic S."/>
            <person name="Trentmann O."/>
            <person name="Hoermiller I.I."/>
            <person name="Heyer A.G."/>
            <person name="Marten I."/>
            <person name="Hedrich R."/>
            <person name="Neuhaus H.E."/>
        </authorList>
    </citation>
    <scope>FUNCTION</scope>
    <scope>TRANSPORTER ACTIVITY</scope>
    <source>
        <strain>cv. Columbia</strain>
    </source>
</reference>
<reference key="9">
    <citation type="journal article" date="2011" name="Plant J.">
        <title>Proton-driven sucrose symport and antiport are provided by the vacuolar transporters SUC4 and TMT1/2.</title>
        <authorList>
            <person name="Schulz A."/>
            <person name="Beyhl D."/>
            <person name="Marten I."/>
            <person name="Wormit A."/>
            <person name="Neuhaus E."/>
            <person name="Poschet G."/>
            <person name="Buettner M."/>
            <person name="Schneider S."/>
            <person name="Sauer N."/>
            <person name="Hedrich R."/>
        </authorList>
    </citation>
    <scope>FUNCTION</scope>
    <scope>TRANSPORTER ACTIVITY</scope>
    <source>
        <strain>cv. Columbia</strain>
    </source>
</reference>
<reference key="10">
    <citation type="journal article" date="2011" name="Plant J.">
        <title>A member of the mitogen-activated protein 3-kinase family is involved in the regulation of plant vacuolar glucose uptake.</title>
        <authorList>
            <person name="Wingenter K."/>
            <person name="Trentmann O."/>
            <person name="Winschuh I."/>
            <person name="Hoermiller I.I."/>
            <person name="Heyer A.G."/>
            <person name="Reinders J."/>
            <person name="Schulz A."/>
            <person name="Geiger D."/>
            <person name="Hedrich R."/>
            <person name="Neuhaus H.E."/>
        </authorList>
    </citation>
    <scope>ACTIVITY REGULATION</scope>
    <scope>PHOSPHORYLATION BY VIK</scope>
    <scope>INTERACTION WITH VIK</scope>
    <scope>SUBCELLULAR LOCATION</scope>
</reference>
<keyword id="KW-0472">Membrane</keyword>
<keyword id="KW-0597">Phosphoprotein</keyword>
<keyword id="KW-1185">Reference proteome</keyword>
<keyword id="KW-0762">Sugar transport</keyword>
<keyword id="KW-0812">Transmembrane</keyword>
<keyword id="KW-1133">Transmembrane helix</keyword>
<keyword id="KW-0813">Transport</keyword>
<keyword id="KW-0926">Vacuole</keyword>
<dbReference type="EMBL" id="Z50752">
    <property type="protein sequence ID" value="CAA90628.1"/>
    <property type="status" value="ALT_FRAME"/>
    <property type="molecule type" value="mRNA"/>
</dbReference>
<dbReference type="EMBL" id="AC007369">
    <property type="protein sequence ID" value="AAD30608.1"/>
    <property type="molecule type" value="Genomic_DNA"/>
</dbReference>
<dbReference type="EMBL" id="AC069251">
    <property type="protein sequence ID" value="AAF80627.1"/>
    <property type="molecule type" value="Genomic_DNA"/>
</dbReference>
<dbReference type="EMBL" id="CP002684">
    <property type="protein sequence ID" value="AEE30030.1"/>
    <property type="molecule type" value="Genomic_DNA"/>
</dbReference>
<dbReference type="EMBL" id="CP002684">
    <property type="protein sequence ID" value="ANM60885.1"/>
    <property type="molecule type" value="Genomic_DNA"/>
</dbReference>
<dbReference type="PIR" id="H86340">
    <property type="entry name" value="H86340"/>
</dbReference>
<dbReference type="PIR" id="T51139">
    <property type="entry name" value="T51139"/>
</dbReference>
<dbReference type="RefSeq" id="NP_001319055.1">
    <property type="nucleotide sequence ID" value="NM_001332471.1"/>
</dbReference>
<dbReference type="RefSeq" id="NP_173508.1">
    <property type="nucleotide sequence ID" value="NM_101937.6"/>
</dbReference>
<dbReference type="BioGRID" id="23915">
    <property type="interactions" value="3"/>
</dbReference>
<dbReference type="STRING" id="3702.Q96290"/>
<dbReference type="TCDB" id="2.A.1.1.84">
    <property type="family name" value="the major facilitator superfamily (mfs)"/>
</dbReference>
<dbReference type="iPTMnet" id="Q96290"/>
<dbReference type="PaxDb" id="3702-AT1G20840.1"/>
<dbReference type="ProteomicsDB" id="238925"/>
<dbReference type="EnsemblPlants" id="AT1G20840.1">
    <property type="protein sequence ID" value="AT1G20840.1"/>
    <property type="gene ID" value="AT1G20840"/>
</dbReference>
<dbReference type="EnsemblPlants" id="AT1G20840.2">
    <property type="protein sequence ID" value="AT1G20840.2"/>
    <property type="gene ID" value="AT1G20840"/>
</dbReference>
<dbReference type="GeneID" id="838676"/>
<dbReference type="Gramene" id="AT1G20840.1">
    <property type="protein sequence ID" value="AT1G20840.1"/>
    <property type="gene ID" value="AT1G20840"/>
</dbReference>
<dbReference type="Gramene" id="AT1G20840.2">
    <property type="protein sequence ID" value="AT1G20840.2"/>
    <property type="gene ID" value="AT1G20840"/>
</dbReference>
<dbReference type="KEGG" id="ath:AT1G20840"/>
<dbReference type="Araport" id="AT1G20840"/>
<dbReference type="TAIR" id="AT1G20840">
    <property type="gene designation" value="TMT1"/>
</dbReference>
<dbReference type="eggNOG" id="KOG0254">
    <property type="taxonomic scope" value="Eukaryota"/>
</dbReference>
<dbReference type="HOGENOM" id="CLU_015397_1_0_1"/>
<dbReference type="InParanoid" id="Q96290"/>
<dbReference type="OMA" id="ESHYNKD"/>
<dbReference type="OrthoDB" id="6339427at2759"/>
<dbReference type="PhylomeDB" id="Q96290"/>
<dbReference type="PRO" id="PR:Q96290"/>
<dbReference type="Proteomes" id="UP000006548">
    <property type="component" value="Chromosome 1"/>
</dbReference>
<dbReference type="ExpressionAtlas" id="Q96290">
    <property type="expression patterns" value="baseline and differential"/>
</dbReference>
<dbReference type="GO" id="GO:0005634">
    <property type="term" value="C:nucleus"/>
    <property type="evidence" value="ECO:0007005"/>
    <property type="project" value="TAIR"/>
</dbReference>
<dbReference type="GO" id="GO:0000325">
    <property type="term" value="C:plant-type vacuole"/>
    <property type="evidence" value="ECO:0000314"/>
    <property type="project" value="UniProtKB"/>
</dbReference>
<dbReference type="GO" id="GO:0009705">
    <property type="term" value="C:plant-type vacuole membrane"/>
    <property type="evidence" value="ECO:0000314"/>
    <property type="project" value="TAIR"/>
</dbReference>
<dbReference type="GO" id="GO:0019900">
    <property type="term" value="F:kinase binding"/>
    <property type="evidence" value="ECO:0000353"/>
    <property type="project" value="UniProtKB"/>
</dbReference>
<dbReference type="GO" id="GO:0022857">
    <property type="term" value="F:transmembrane transporter activity"/>
    <property type="evidence" value="ECO:0007669"/>
    <property type="project" value="InterPro"/>
</dbReference>
<dbReference type="GO" id="GO:0009409">
    <property type="term" value="P:response to cold"/>
    <property type="evidence" value="ECO:0000270"/>
    <property type="project" value="UniProtKB"/>
</dbReference>
<dbReference type="GO" id="GO:0009750">
    <property type="term" value="P:response to fructose"/>
    <property type="evidence" value="ECO:0000270"/>
    <property type="project" value="UniProtKB"/>
</dbReference>
<dbReference type="GO" id="GO:0009749">
    <property type="term" value="P:response to glucose"/>
    <property type="evidence" value="ECO:0000270"/>
    <property type="project" value="UniProtKB"/>
</dbReference>
<dbReference type="GO" id="GO:0009624">
    <property type="term" value="P:response to nematode"/>
    <property type="evidence" value="ECO:0007007"/>
    <property type="project" value="TAIR"/>
</dbReference>
<dbReference type="GO" id="GO:1902074">
    <property type="term" value="P:response to salt"/>
    <property type="evidence" value="ECO:0000270"/>
    <property type="project" value="UniProtKB"/>
</dbReference>
<dbReference type="GO" id="GO:0009744">
    <property type="term" value="P:response to sucrose"/>
    <property type="evidence" value="ECO:0000270"/>
    <property type="project" value="UniProtKB"/>
</dbReference>
<dbReference type="GO" id="GO:0009414">
    <property type="term" value="P:response to water deprivation"/>
    <property type="evidence" value="ECO:0000270"/>
    <property type="project" value="UniProtKB"/>
</dbReference>
<dbReference type="FunFam" id="1.20.1250.20:FF:000108">
    <property type="entry name" value="Monosaccharide-sensing protein 2"/>
    <property type="match status" value="1"/>
</dbReference>
<dbReference type="FunFam" id="1.20.1250.20:FF:000103">
    <property type="entry name" value="monosaccharide-sensing protein 2"/>
    <property type="match status" value="1"/>
</dbReference>
<dbReference type="Gene3D" id="1.20.1250.20">
    <property type="entry name" value="MFS general substrate transporter like domains"/>
    <property type="match status" value="2"/>
</dbReference>
<dbReference type="InterPro" id="IPR020846">
    <property type="entry name" value="MFS_dom"/>
</dbReference>
<dbReference type="InterPro" id="IPR005828">
    <property type="entry name" value="MFS_sugar_transport-like"/>
</dbReference>
<dbReference type="InterPro" id="IPR036259">
    <property type="entry name" value="MFS_trans_sf"/>
</dbReference>
<dbReference type="InterPro" id="IPR050814">
    <property type="entry name" value="Myo-inositol_Transporter"/>
</dbReference>
<dbReference type="InterPro" id="IPR003663">
    <property type="entry name" value="Sugar/inositol_transpt"/>
</dbReference>
<dbReference type="InterPro" id="IPR005829">
    <property type="entry name" value="Sugar_transporter_CS"/>
</dbReference>
<dbReference type="PANTHER" id="PTHR48020">
    <property type="entry name" value="PROTON MYO-INOSITOL COTRANSPORTER"/>
    <property type="match status" value="1"/>
</dbReference>
<dbReference type="PANTHER" id="PTHR48020:SF35">
    <property type="entry name" value="SUGAR TRANSPORTER"/>
    <property type="match status" value="1"/>
</dbReference>
<dbReference type="Pfam" id="PF00083">
    <property type="entry name" value="Sugar_tr"/>
    <property type="match status" value="2"/>
</dbReference>
<dbReference type="PRINTS" id="PR00171">
    <property type="entry name" value="SUGRTRNSPORT"/>
</dbReference>
<dbReference type="SUPFAM" id="SSF103473">
    <property type="entry name" value="MFS general substrate transporter"/>
    <property type="match status" value="1"/>
</dbReference>
<dbReference type="PROSITE" id="PS50850">
    <property type="entry name" value="MFS"/>
    <property type="match status" value="1"/>
</dbReference>
<dbReference type="PROSITE" id="PS00216">
    <property type="entry name" value="SUGAR_TRANSPORT_1"/>
    <property type="match status" value="1"/>
</dbReference>
<dbReference type="PROSITE" id="PS00217">
    <property type="entry name" value="SUGAR_TRANSPORT_2"/>
    <property type="match status" value="1"/>
</dbReference>
<name>MSSP1_ARATH</name>
<protein>
    <recommendedName>
        <fullName evidence="10">Monosaccharide-sensing protein 1</fullName>
    </recommendedName>
    <alternativeName>
        <fullName evidence="7">Monosaccharide transporter 1</fullName>
    </alternativeName>
    <alternativeName>
        <fullName evidence="10">Sugar transporter MSSP1</fullName>
    </alternativeName>
    <alternativeName>
        <fullName evidence="7">Sugar transporter MT1</fullName>
    </alternativeName>
    <alternativeName>
        <fullName evidence="8 9">Tonoplast monosaccharide transporter 1</fullName>
        <shortName evidence="7 8 9">AtTMT1</shortName>
    </alternativeName>
</protein>